<evidence type="ECO:0000250" key="1">
    <source>
        <dbReference type="UniProtKB" id="P29536"/>
    </source>
</evidence>
<evidence type="ECO:0000255" key="2">
    <source>
        <dbReference type="PROSITE-ProRule" id="PRU00406"/>
    </source>
</evidence>
<evidence type="ECO:0000256" key="3">
    <source>
        <dbReference type="SAM" id="MobiDB-lite"/>
    </source>
</evidence>
<evidence type="ECO:0000269" key="4">
    <source>
    </source>
</evidence>
<evidence type="ECO:0000269" key="5">
    <source>
    </source>
</evidence>
<evidence type="ECO:0000303" key="6">
    <source>
    </source>
</evidence>
<evidence type="ECO:0000305" key="7"/>
<evidence type="ECO:0000312" key="8">
    <source>
        <dbReference type="Proteomes" id="UP000002494"/>
    </source>
</evidence>
<evidence type="ECO:0000312" key="9">
    <source>
        <dbReference type="RGD" id="1307236"/>
    </source>
</evidence>
<evidence type="ECO:0007744" key="10">
    <source>
    </source>
</evidence>
<name>LMOD1_RAT</name>
<feature type="chain" id="PRO_0000437122" description="Leiomodin-1">
    <location>
        <begin position="1"/>
        <end position="595"/>
    </location>
</feature>
<feature type="repeat" description="1" evidence="7">
    <location>
        <begin position="165"/>
        <end position="180"/>
    </location>
</feature>
<feature type="repeat" description="2" evidence="7">
    <location>
        <begin position="181"/>
        <end position="196"/>
    </location>
</feature>
<feature type="repeat" description="3" evidence="7">
    <location>
        <begin position="197"/>
        <end position="212"/>
    </location>
</feature>
<feature type="repeat" description="4" evidence="7">
    <location>
        <begin position="213"/>
        <end position="227"/>
    </location>
</feature>
<feature type="repeat" description="5" evidence="7">
    <location>
        <begin position="228"/>
        <end position="243"/>
    </location>
</feature>
<feature type="repeat" description="6" evidence="7">
    <location>
        <begin position="244"/>
        <end position="257"/>
    </location>
</feature>
<feature type="repeat" description="7" evidence="7">
    <location>
        <begin position="258"/>
        <end position="273"/>
    </location>
</feature>
<feature type="repeat" description="8" evidence="7">
    <location>
        <begin position="274"/>
        <end position="288"/>
    </location>
</feature>
<feature type="domain" description="WH2" evidence="2">
    <location>
        <begin position="569"/>
        <end position="588"/>
    </location>
</feature>
<feature type="region of interest" description="Disordered" evidence="3">
    <location>
        <begin position="1"/>
        <end position="322"/>
    </location>
</feature>
<feature type="region of interest" description="8 X approximate tandem repeats" evidence="7">
    <location>
        <begin position="165"/>
        <end position="288"/>
    </location>
</feature>
<feature type="region of interest" description="Disordered" evidence="3">
    <location>
        <begin position="467"/>
        <end position="568"/>
    </location>
</feature>
<feature type="region of interest" description="5 X 4 AA approximate tandem repeats" evidence="7">
    <location>
        <begin position="503"/>
        <end position="522"/>
    </location>
</feature>
<feature type="compositionally biased region" description="Acidic residues" evidence="3">
    <location>
        <begin position="27"/>
        <end position="40"/>
    </location>
</feature>
<feature type="compositionally biased region" description="Basic and acidic residues" evidence="3">
    <location>
        <begin position="72"/>
        <end position="105"/>
    </location>
</feature>
<feature type="compositionally biased region" description="Basic and acidic residues" evidence="3">
    <location>
        <begin position="117"/>
        <end position="127"/>
    </location>
</feature>
<feature type="compositionally biased region" description="Basic and acidic residues" evidence="3">
    <location>
        <begin position="134"/>
        <end position="193"/>
    </location>
</feature>
<feature type="compositionally biased region" description="Basic and acidic residues" evidence="3">
    <location>
        <begin position="201"/>
        <end position="224"/>
    </location>
</feature>
<feature type="compositionally biased region" description="Basic and acidic residues" evidence="3">
    <location>
        <begin position="232"/>
        <end position="251"/>
    </location>
</feature>
<feature type="compositionally biased region" description="Basic and acidic residues" evidence="3">
    <location>
        <begin position="259"/>
        <end position="289"/>
    </location>
</feature>
<feature type="compositionally biased region" description="Basic and acidic residues" evidence="3">
    <location>
        <begin position="467"/>
        <end position="476"/>
    </location>
</feature>
<feature type="compositionally biased region" description="Basic and acidic residues" evidence="3">
    <location>
        <begin position="484"/>
        <end position="493"/>
    </location>
</feature>
<feature type="compositionally biased region" description="Pro residues" evidence="3">
    <location>
        <begin position="503"/>
        <end position="513"/>
    </location>
</feature>
<feature type="compositionally biased region" description="Pro residues" evidence="3">
    <location>
        <begin position="527"/>
        <end position="538"/>
    </location>
</feature>
<feature type="modified residue" description="Phosphoserine" evidence="10">
    <location>
        <position position="12"/>
    </location>
</feature>
<feature type="modified residue" description="Phosphoserine" evidence="10">
    <location>
        <position position="85"/>
    </location>
</feature>
<feature type="modified residue" description="Phosphoserine" evidence="10">
    <location>
        <position position="135"/>
    </location>
</feature>
<feature type="modified residue" description="Phosphoserine" evidence="10">
    <location>
        <position position="550"/>
    </location>
</feature>
<gene>
    <name evidence="9" type="primary">Lmod1</name>
</gene>
<sequence>MSKVAKYRRQVSEDPDIDSLLSTLSPEEMEELEKELDVVDPDGSIPVGLRQRNQTDKQPSGSFNREAMLNFCEKESKKIIQREMSVDESKQVGRKTDAKNGEDKGSNASRKALGPRQDSDVGKEPKKGVLKKSFSRDREEADSRGSEKPKEEKVIRGIDKGRVRAAVDRKEAGKDGREERAAATTKKEEEKTGSVRNAGLSRDKDKKREEVKEPSKKEEVKLTAENRSTVGRQEDGKQKESREDRDKKPEVKGIGCGSRDSRKEDEKVKKEETQPDKGVREEGKTREKQPPSGPSKPSDGQARAEEEAAPSIFDEPLEKVKNNDPEMTEVNVNNSDCITNEILVRFTEALEFNTVVKVFALANTRADDHVAFAIAIMLKANKTITSLNLDSNHITGKGILAIFRALLQNNTLTELRFHNQRHICGGKTEMEIAKLLKENTTLLKLGYHFELAGPRMTVTNLLSRNMDKQRQKRLQEQKQAQEASGEKKDRLEVPKVGALPKGSPKPSPQPSPKSAPKNSPKKAGVPAAPPPPPPPLAPPLIMENLKNSLSPATQRKMGDKVLPAQEKNSRDQLLAAIRSSNLKQLKKVEVPKLLQ</sequence>
<dbReference type="EMBL" id="AC096239">
    <property type="status" value="NOT_ANNOTATED_CDS"/>
    <property type="molecule type" value="Genomic_DNA"/>
</dbReference>
<dbReference type="RefSeq" id="NP_001100649.2">
    <property type="nucleotide sequence ID" value="NM_001107179.3"/>
</dbReference>
<dbReference type="RefSeq" id="XP_008767784.1">
    <property type="nucleotide sequence ID" value="XM_008769562.2"/>
</dbReference>
<dbReference type="SMR" id="A0A0G2K0D3"/>
<dbReference type="FunCoup" id="A0A0G2K0D3">
    <property type="interactions" value="148"/>
</dbReference>
<dbReference type="IntAct" id="A0A0G2K0D3">
    <property type="interactions" value="4"/>
</dbReference>
<dbReference type="STRING" id="10116.ENSRNOP00000071399"/>
<dbReference type="iPTMnet" id="A0A0G2K0D3"/>
<dbReference type="PhosphoSitePlus" id="A0A0G2K0D3"/>
<dbReference type="PaxDb" id="10116-ENSRNOP00000009623"/>
<dbReference type="GeneID" id="304816"/>
<dbReference type="AGR" id="RGD:1307236"/>
<dbReference type="RGD" id="1307236">
    <property type="gene designation" value="Lmod1"/>
</dbReference>
<dbReference type="VEuPathDB" id="HostDB:ENSRNOG00000051548"/>
<dbReference type="eggNOG" id="KOG3735">
    <property type="taxonomic scope" value="Eukaryota"/>
</dbReference>
<dbReference type="InParanoid" id="A0A0G2K0D3"/>
<dbReference type="OrthoDB" id="2163268at2759"/>
<dbReference type="Reactome" id="R-RNO-445355">
    <property type="pathway name" value="Smooth Muscle Contraction"/>
</dbReference>
<dbReference type="PRO" id="PR:A0A0G2K0D3"/>
<dbReference type="Proteomes" id="UP000002494">
    <property type="component" value="Chromosome 13"/>
</dbReference>
<dbReference type="Bgee" id="ENSRNOG00000051548">
    <property type="expression patterns" value="Expressed in esophagus and 18 other cell types or tissues"/>
</dbReference>
<dbReference type="GO" id="GO:0005884">
    <property type="term" value="C:actin filament"/>
    <property type="evidence" value="ECO:0000314"/>
    <property type="project" value="UniProtKB"/>
</dbReference>
<dbReference type="GO" id="GO:0005856">
    <property type="term" value="C:cytoskeleton"/>
    <property type="evidence" value="ECO:0000318"/>
    <property type="project" value="GO_Central"/>
</dbReference>
<dbReference type="GO" id="GO:0030016">
    <property type="term" value="C:myofibril"/>
    <property type="evidence" value="ECO:0000266"/>
    <property type="project" value="RGD"/>
</dbReference>
<dbReference type="GO" id="GO:0030017">
    <property type="term" value="C:sarcomere"/>
    <property type="evidence" value="ECO:0000314"/>
    <property type="project" value="UniProtKB"/>
</dbReference>
<dbReference type="GO" id="GO:0005865">
    <property type="term" value="C:striated muscle thin filament"/>
    <property type="evidence" value="ECO:0000318"/>
    <property type="project" value="GO_Central"/>
</dbReference>
<dbReference type="GO" id="GO:0003779">
    <property type="term" value="F:actin binding"/>
    <property type="evidence" value="ECO:0007669"/>
    <property type="project" value="UniProtKB-KW"/>
</dbReference>
<dbReference type="GO" id="GO:0005523">
    <property type="term" value="F:tropomyosin binding"/>
    <property type="evidence" value="ECO:0000318"/>
    <property type="project" value="GO_Central"/>
</dbReference>
<dbReference type="GO" id="GO:0007015">
    <property type="term" value="P:actin filament organization"/>
    <property type="evidence" value="ECO:0000318"/>
    <property type="project" value="GO_Central"/>
</dbReference>
<dbReference type="GO" id="GO:0045010">
    <property type="term" value="P:actin nucleation"/>
    <property type="evidence" value="ECO:0000250"/>
    <property type="project" value="UniProtKB"/>
</dbReference>
<dbReference type="GO" id="GO:0006936">
    <property type="term" value="P:muscle contraction"/>
    <property type="evidence" value="ECO:0000318"/>
    <property type="project" value="GO_Central"/>
</dbReference>
<dbReference type="GO" id="GO:0030239">
    <property type="term" value="P:myofibril assembly"/>
    <property type="evidence" value="ECO:0000318"/>
    <property type="project" value="GO_Central"/>
</dbReference>
<dbReference type="GO" id="GO:0051694">
    <property type="term" value="P:pointed-end actin filament capping"/>
    <property type="evidence" value="ECO:0007669"/>
    <property type="project" value="InterPro"/>
</dbReference>
<dbReference type="GO" id="GO:0030838">
    <property type="term" value="P:positive regulation of actin filament polymerization"/>
    <property type="evidence" value="ECO:0000250"/>
    <property type="project" value="UniProtKB"/>
</dbReference>
<dbReference type="FunFam" id="3.80.10.10:FF:000083">
    <property type="entry name" value="Leiomodin 1"/>
    <property type="match status" value="1"/>
</dbReference>
<dbReference type="Gene3D" id="3.80.10.10">
    <property type="entry name" value="Ribonuclease Inhibitor"/>
    <property type="match status" value="1"/>
</dbReference>
<dbReference type="InterPro" id="IPR032675">
    <property type="entry name" value="LRR_dom_sf"/>
</dbReference>
<dbReference type="InterPro" id="IPR004934">
    <property type="entry name" value="TMOD"/>
</dbReference>
<dbReference type="InterPro" id="IPR003124">
    <property type="entry name" value="WH2_dom"/>
</dbReference>
<dbReference type="PANTHER" id="PTHR10901:SF5">
    <property type="entry name" value="LEIOMODIN-1"/>
    <property type="match status" value="1"/>
</dbReference>
<dbReference type="PANTHER" id="PTHR10901">
    <property type="entry name" value="TROPOMODULIN"/>
    <property type="match status" value="1"/>
</dbReference>
<dbReference type="Pfam" id="PF03250">
    <property type="entry name" value="Tropomodulin"/>
    <property type="match status" value="1"/>
</dbReference>
<dbReference type="Pfam" id="PF02205">
    <property type="entry name" value="WH2"/>
    <property type="match status" value="1"/>
</dbReference>
<dbReference type="SMART" id="SM00246">
    <property type="entry name" value="WH2"/>
    <property type="match status" value="1"/>
</dbReference>
<dbReference type="SUPFAM" id="SSF52047">
    <property type="entry name" value="RNI-like"/>
    <property type="match status" value="1"/>
</dbReference>
<dbReference type="PROSITE" id="PS51082">
    <property type="entry name" value="WH2"/>
    <property type="match status" value="1"/>
</dbReference>
<comment type="function">
    <text evidence="1">Required for proper contractility of visceral smooth muscle cells (By similarity). Mediates nucleation of actin filaments (By similarity).</text>
</comment>
<comment type="subcellular location">
    <subcellularLocation>
        <location evidence="4 5">Cytoplasm</location>
        <location evidence="4 5">Myofibril</location>
        <location evidence="4 5">Sarcomere</location>
    </subcellularLocation>
    <subcellularLocation>
        <location evidence="4 5">Cytoplasm</location>
        <location evidence="4 5">Cytoskeleton</location>
    </subcellularLocation>
    <text evidence="4 5">Colocalizes with actin filaments in sarcomeres.</text>
</comment>
<comment type="tissue specificity">
    <text evidence="4 5">Detected in smooth muscle, in stomach and uterus, blood vessel wall, and in slow fibers in extraocular muscle, urinary bladder and sternothyroid muscle (at protein level).</text>
</comment>
<accession>A0A0G2K0D3</accession>
<proteinExistence type="evidence at protein level"/>
<reference key="1">
    <citation type="journal article" date="2004" name="Nature">
        <title>Genome sequence of the Brown Norway rat yields insights into mammalian evolution.</title>
        <authorList>
            <person name="Gibbs R.A."/>
            <person name="Weinstock G.M."/>
            <person name="Metzker M.L."/>
            <person name="Muzny D.M."/>
            <person name="Sodergren E.J."/>
            <person name="Scherer S."/>
            <person name="Scott G."/>
            <person name="Steffen D."/>
            <person name="Worley K.C."/>
            <person name="Burch P.E."/>
            <person name="Okwuonu G."/>
            <person name="Hines S."/>
            <person name="Lewis L."/>
            <person name="Deramo C."/>
            <person name="Delgado O."/>
            <person name="Dugan-Rocha S."/>
            <person name="Miner G."/>
            <person name="Morgan M."/>
            <person name="Hawes A."/>
            <person name="Gill R."/>
            <person name="Holt R.A."/>
            <person name="Adams M.D."/>
            <person name="Amanatides P.G."/>
            <person name="Baden-Tillson H."/>
            <person name="Barnstead M."/>
            <person name="Chin S."/>
            <person name="Evans C.A."/>
            <person name="Ferriera S."/>
            <person name="Fosler C."/>
            <person name="Glodek A."/>
            <person name="Gu Z."/>
            <person name="Jennings D."/>
            <person name="Kraft C.L."/>
            <person name="Nguyen T."/>
            <person name="Pfannkoch C.M."/>
            <person name="Sitter C."/>
            <person name="Sutton G.G."/>
            <person name="Venter J.C."/>
            <person name="Woodage T."/>
            <person name="Smith D."/>
            <person name="Lee H.-M."/>
            <person name="Gustafson E."/>
            <person name="Cahill P."/>
            <person name="Kana A."/>
            <person name="Doucette-Stamm L."/>
            <person name="Weinstock K."/>
            <person name="Fechtel K."/>
            <person name="Weiss R.B."/>
            <person name="Dunn D.M."/>
            <person name="Green E.D."/>
            <person name="Blakesley R.W."/>
            <person name="Bouffard G.G."/>
            <person name="De Jong P.J."/>
            <person name="Osoegawa K."/>
            <person name="Zhu B."/>
            <person name="Marra M."/>
            <person name="Schein J."/>
            <person name="Bosdet I."/>
            <person name="Fjell C."/>
            <person name="Jones S."/>
            <person name="Krzywinski M."/>
            <person name="Mathewson C."/>
            <person name="Siddiqui A."/>
            <person name="Wye N."/>
            <person name="McPherson J."/>
            <person name="Zhao S."/>
            <person name="Fraser C.M."/>
            <person name="Shetty J."/>
            <person name="Shatsman S."/>
            <person name="Geer K."/>
            <person name="Chen Y."/>
            <person name="Abramzon S."/>
            <person name="Nierman W.C."/>
            <person name="Havlak P.H."/>
            <person name="Chen R."/>
            <person name="Durbin K.J."/>
            <person name="Egan A."/>
            <person name="Ren Y."/>
            <person name="Song X.-Z."/>
            <person name="Li B."/>
            <person name="Liu Y."/>
            <person name="Qin X."/>
            <person name="Cawley S."/>
            <person name="Cooney A.J."/>
            <person name="D'Souza L.M."/>
            <person name="Martin K."/>
            <person name="Wu J.Q."/>
            <person name="Gonzalez-Garay M.L."/>
            <person name="Jackson A.R."/>
            <person name="Kalafus K.J."/>
            <person name="McLeod M.P."/>
            <person name="Milosavljevic A."/>
            <person name="Virk D."/>
            <person name="Volkov A."/>
            <person name="Wheeler D.A."/>
            <person name="Zhang Z."/>
            <person name="Bailey J.A."/>
            <person name="Eichler E.E."/>
            <person name="Tuzun E."/>
            <person name="Birney E."/>
            <person name="Mongin E."/>
            <person name="Ureta-Vidal A."/>
            <person name="Woodwark C."/>
            <person name="Zdobnov E."/>
            <person name="Bork P."/>
            <person name="Suyama M."/>
            <person name="Torrents D."/>
            <person name="Alexandersson M."/>
            <person name="Trask B.J."/>
            <person name="Young J.M."/>
            <person name="Huang H."/>
            <person name="Wang H."/>
            <person name="Xing H."/>
            <person name="Daniels S."/>
            <person name="Gietzen D."/>
            <person name="Schmidt J."/>
            <person name="Stevens K."/>
            <person name="Vitt U."/>
            <person name="Wingrove J."/>
            <person name="Camara F."/>
            <person name="Mar Alba M."/>
            <person name="Abril J.F."/>
            <person name="Guigo R."/>
            <person name="Smit A."/>
            <person name="Dubchak I."/>
            <person name="Rubin E.M."/>
            <person name="Couronne O."/>
            <person name="Poliakov A."/>
            <person name="Huebner N."/>
            <person name="Ganten D."/>
            <person name="Goesele C."/>
            <person name="Hummel O."/>
            <person name="Kreitler T."/>
            <person name="Lee Y.-A."/>
            <person name="Monti J."/>
            <person name="Schulz H."/>
            <person name="Zimdahl H."/>
            <person name="Himmelbauer H."/>
            <person name="Lehrach H."/>
            <person name="Jacob H.J."/>
            <person name="Bromberg S."/>
            <person name="Gullings-Handley J."/>
            <person name="Jensen-Seaman M.I."/>
            <person name="Kwitek A.E."/>
            <person name="Lazar J."/>
            <person name="Pasko D."/>
            <person name="Tonellato P.J."/>
            <person name="Twigger S."/>
            <person name="Ponting C.P."/>
            <person name="Duarte J.M."/>
            <person name="Rice S."/>
            <person name="Goodstadt L."/>
            <person name="Beatson S.A."/>
            <person name="Emes R.D."/>
            <person name="Winter E.E."/>
            <person name="Webber C."/>
            <person name="Brandt P."/>
            <person name="Nyakatura G."/>
            <person name="Adetobi M."/>
            <person name="Chiaromonte F."/>
            <person name="Elnitski L."/>
            <person name="Eswara P."/>
            <person name="Hardison R.C."/>
            <person name="Hou M."/>
            <person name="Kolbe D."/>
            <person name="Makova K."/>
            <person name="Miller W."/>
            <person name="Nekrutenko A."/>
            <person name="Riemer C."/>
            <person name="Schwartz S."/>
            <person name="Taylor J."/>
            <person name="Yang S."/>
            <person name="Zhang Y."/>
            <person name="Lindpaintner K."/>
            <person name="Andrews T.D."/>
            <person name="Caccamo M."/>
            <person name="Clamp M."/>
            <person name="Clarke L."/>
            <person name="Curwen V."/>
            <person name="Durbin R.M."/>
            <person name="Eyras E."/>
            <person name="Searle S.M."/>
            <person name="Cooper G.M."/>
            <person name="Batzoglou S."/>
            <person name="Brudno M."/>
            <person name="Sidow A."/>
            <person name="Stone E.A."/>
            <person name="Payseur B.A."/>
            <person name="Bourque G."/>
            <person name="Lopez-Otin C."/>
            <person name="Puente X.S."/>
            <person name="Chakrabarti K."/>
            <person name="Chatterji S."/>
            <person name="Dewey C."/>
            <person name="Pachter L."/>
            <person name="Bray N."/>
            <person name="Yap V.B."/>
            <person name="Caspi A."/>
            <person name="Tesler G."/>
            <person name="Pevzner P.A."/>
            <person name="Haussler D."/>
            <person name="Roskin K.M."/>
            <person name="Baertsch R."/>
            <person name="Clawson H."/>
            <person name="Furey T.S."/>
            <person name="Hinrichs A.S."/>
            <person name="Karolchik D."/>
            <person name="Kent W.J."/>
            <person name="Rosenbloom K.R."/>
            <person name="Trumbower H."/>
            <person name="Weirauch M."/>
            <person name="Cooper D.N."/>
            <person name="Stenson P.D."/>
            <person name="Ma B."/>
            <person name="Brent M."/>
            <person name="Arumugam M."/>
            <person name="Shteynberg D."/>
            <person name="Copley R.R."/>
            <person name="Taylor M.S."/>
            <person name="Riethman H."/>
            <person name="Mudunuri U."/>
            <person name="Peterson J."/>
            <person name="Guyer M."/>
            <person name="Felsenfeld A."/>
            <person name="Old S."/>
            <person name="Mockrin S."/>
            <person name="Collins F.S."/>
        </authorList>
    </citation>
    <scope>NUCLEOTIDE SEQUENCE [LARGE SCALE GENOMIC DNA]</scope>
    <source>
        <strain>Brown Norway</strain>
    </source>
</reference>
<reference key="2">
    <citation type="journal article" date="1999" name="Curr. Eye Res.">
        <title>Localization of the human 64kD autoantigen D1 to myofibrils in a subset of extraocular muscle fibers.</title>
        <authorList>
            <person name="Conley C.A."/>
            <person name="Fowler V.M."/>
        </authorList>
    </citation>
    <scope>SUBCELLULAR LOCATION</scope>
    <scope>TISSUE SPECIFICITY</scope>
</reference>
<reference key="3">
    <citation type="journal article" date="2001" name="Am. J. Physiol.">
        <title>Leiomodin and tropomodulin in smooth muscle.</title>
        <authorList>
            <person name="Conley C.A."/>
        </authorList>
    </citation>
    <scope>SUBCELLULAR LOCATION</scope>
    <scope>TISSUE SPECIFICITY</scope>
</reference>
<reference key="4">
    <citation type="journal article" date="2012" name="Nat. Commun.">
        <title>Quantitative maps of protein phosphorylation sites across 14 different rat organs and tissues.</title>
        <authorList>
            <person name="Lundby A."/>
            <person name="Secher A."/>
            <person name="Lage K."/>
            <person name="Nordsborg N.B."/>
            <person name="Dmytriyev A."/>
            <person name="Lundby C."/>
            <person name="Olsen J.V."/>
        </authorList>
    </citation>
    <scope>PHOSPHORYLATION [LARGE SCALE ANALYSIS] AT SER-12; SER-85; SER-135 AND SER-550</scope>
    <scope>IDENTIFICATION BY MASS SPECTROMETRY [LARGE SCALE ANALYSIS]</scope>
</reference>
<protein>
    <recommendedName>
        <fullName>Leiomodin-1</fullName>
    </recommendedName>
    <alternativeName>
        <fullName evidence="6">Smooth muscle leiomodin</fullName>
        <shortName evidence="6">SM-Lmod</shortName>
    </alternativeName>
</protein>
<organism evidence="8">
    <name type="scientific">Rattus norvegicus</name>
    <name type="common">Rat</name>
    <dbReference type="NCBI Taxonomy" id="10116"/>
    <lineage>
        <taxon>Eukaryota</taxon>
        <taxon>Metazoa</taxon>
        <taxon>Chordata</taxon>
        <taxon>Craniata</taxon>
        <taxon>Vertebrata</taxon>
        <taxon>Euteleostomi</taxon>
        <taxon>Mammalia</taxon>
        <taxon>Eutheria</taxon>
        <taxon>Euarchontoglires</taxon>
        <taxon>Glires</taxon>
        <taxon>Rodentia</taxon>
        <taxon>Myomorpha</taxon>
        <taxon>Muroidea</taxon>
        <taxon>Muridae</taxon>
        <taxon>Murinae</taxon>
        <taxon>Rattus</taxon>
    </lineage>
</organism>
<keyword id="KW-0009">Actin-binding</keyword>
<keyword id="KW-0963">Cytoplasm</keyword>
<keyword id="KW-0206">Cytoskeleton</keyword>
<keyword id="KW-0597">Phosphoprotein</keyword>
<keyword id="KW-1185">Reference proteome</keyword>
<keyword id="KW-0677">Repeat</keyword>